<keyword id="KW-1003">Cell membrane</keyword>
<keyword id="KW-0472">Membrane</keyword>
<keyword id="KW-0812">Transmembrane</keyword>
<keyword id="KW-1133">Transmembrane helix</keyword>
<keyword id="KW-0813">Transport</keyword>
<name>AMIS_RHOER</name>
<feature type="chain" id="PRO_0000064585" description="Putative transporter protein AmiS2">
    <location>
        <begin position="1"/>
        <end position="206"/>
    </location>
</feature>
<feature type="transmembrane region" description="Helical" evidence="1">
    <location>
        <begin position="4"/>
        <end position="24"/>
    </location>
</feature>
<feature type="transmembrane region" description="Helical" evidence="1">
    <location>
        <begin position="29"/>
        <end position="49"/>
    </location>
</feature>
<feature type="transmembrane region" description="Helical" evidence="1">
    <location>
        <begin position="56"/>
        <end position="76"/>
    </location>
</feature>
<feature type="transmembrane region" description="Helical" evidence="1">
    <location>
        <begin position="86"/>
        <end position="106"/>
    </location>
</feature>
<feature type="transmembrane region" description="Helical" evidence="1">
    <location>
        <begin position="113"/>
        <end position="133"/>
    </location>
</feature>
<feature type="transmembrane region" description="Helical" evidence="1">
    <location>
        <begin position="142"/>
        <end position="162"/>
    </location>
</feature>
<feature type="transmembrane region" description="Helical" evidence="1">
    <location>
        <begin position="173"/>
        <end position="193"/>
    </location>
</feature>
<reference key="1">
    <citation type="journal article" date="1996" name="Gene">
        <title>Amide metabolism: a putative ABC transporter in Rhodococcus sp. R312.</title>
        <authorList>
            <person name="Chebrou H."/>
            <person name="Bigey F."/>
            <person name="Arnaud A."/>
            <person name="Galzy P."/>
        </authorList>
    </citation>
    <scope>NUCLEOTIDE SEQUENCE [GENOMIC DNA]</scope>
    <source>
        <strain>Brevibacterium sp. R312</strain>
    </source>
</reference>
<accession>Q53185</accession>
<sequence>MGSVGLLYVGAVLFVNGLMLLGTVPVRSASVLNLFVGALQCVVPTVMLIQAQGDSSAVLAASGLYLFGFTYLYVGISNLAGFEPEGIGWFSLFVACAALVYSFLSFTVSNDPVFGVIWLAWAALWTLFFLVLGLGRENLSRFTGWAAILLSQPTCTVPAFLILTGNFHTTPAVAAGWAGALLVLLGLAKILAAPKAAVPQPRPVFN</sequence>
<dbReference type="EMBL" id="Z46523">
    <property type="protein sequence ID" value="CAA86569.1"/>
    <property type="molecule type" value="Genomic_DNA"/>
</dbReference>
<dbReference type="RefSeq" id="WP_166813885.1">
    <property type="nucleotide sequence ID" value="NZ_CP032403.1"/>
</dbReference>
<dbReference type="SMR" id="Q53185"/>
<dbReference type="STRING" id="1833.XU06_02575"/>
<dbReference type="TCDB" id="1.A.29.1.2">
    <property type="family name" value="the urea/amide channel (uac) family"/>
</dbReference>
<dbReference type="GeneID" id="93804598"/>
<dbReference type="GO" id="GO:0005886">
    <property type="term" value="C:plasma membrane"/>
    <property type="evidence" value="ECO:0007669"/>
    <property type="project" value="UniProtKB-SubCell"/>
</dbReference>
<dbReference type="CDD" id="cd13429">
    <property type="entry name" value="UreI_AmiS_like_2"/>
    <property type="match status" value="1"/>
</dbReference>
<dbReference type="Gene3D" id="1.25.40.600">
    <property type="match status" value="1"/>
</dbReference>
<dbReference type="InterPro" id="IPR003211">
    <property type="entry name" value="AmiSUreI_transpt"/>
</dbReference>
<dbReference type="InterPro" id="IPR038523">
    <property type="entry name" value="AmiSUreI_transpt_sf"/>
</dbReference>
<dbReference type="Pfam" id="PF02293">
    <property type="entry name" value="AmiS_UreI"/>
    <property type="match status" value="1"/>
</dbReference>
<comment type="function">
    <text>Possible transporter that might be responsible for the adsorption of amidase substrates or release of their hydrolysis products.</text>
</comment>
<comment type="subcellular location">
    <subcellularLocation>
        <location evidence="2">Cell membrane</location>
        <topology evidence="2">Multi-pass membrane protein</topology>
    </subcellularLocation>
</comment>
<comment type="similarity">
    <text evidence="2">Belongs to the AmiS/UreI family.</text>
</comment>
<organism>
    <name type="scientific">Rhodococcus erythropolis</name>
    <name type="common">Arthrobacter picolinophilus</name>
    <dbReference type="NCBI Taxonomy" id="1833"/>
    <lineage>
        <taxon>Bacteria</taxon>
        <taxon>Bacillati</taxon>
        <taxon>Actinomycetota</taxon>
        <taxon>Actinomycetes</taxon>
        <taxon>Mycobacteriales</taxon>
        <taxon>Nocardiaceae</taxon>
        <taxon>Rhodococcus</taxon>
        <taxon>Rhodococcus erythropolis group</taxon>
    </lineage>
</organism>
<gene>
    <name type="primary">amiS2</name>
</gene>
<protein>
    <recommendedName>
        <fullName>Putative transporter protein AmiS2</fullName>
    </recommendedName>
</protein>
<evidence type="ECO:0000255" key="1"/>
<evidence type="ECO:0000305" key="2"/>
<proteinExistence type="inferred from homology"/>